<keyword id="KW-0963">Cytoplasm</keyword>
<keyword id="KW-0328">Glycosyltransferase</keyword>
<keyword id="KW-0660">Purine salvage</keyword>
<keyword id="KW-0808">Transferase</keyword>
<comment type="function">
    <text evidence="1">Catalyzes a salvage reaction resulting in the formation of AMP, that is energically less costly than de novo synthesis.</text>
</comment>
<comment type="catalytic activity">
    <reaction evidence="1">
        <text>AMP + diphosphate = 5-phospho-alpha-D-ribose 1-diphosphate + adenine</text>
        <dbReference type="Rhea" id="RHEA:16609"/>
        <dbReference type="ChEBI" id="CHEBI:16708"/>
        <dbReference type="ChEBI" id="CHEBI:33019"/>
        <dbReference type="ChEBI" id="CHEBI:58017"/>
        <dbReference type="ChEBI" id="CHEBI:456215"/>
        <dbReference type="EC" id="2.4.2.7"/>
    </reaction>
</comment>
<comment type="pathway">
    <text evidence="1">Purine metabolism; AMP biosynthesis via salvage pathway; AMP from adenine: step 1/1.</text>
</comment>
<comment type="subunit">
    <text evidence="1">Homodimer.</text>
</comment>
<comment type="subcellular location">
    <subcellularLocation>
        <location evidence="1">Cytoplasm</location>
    </subcellularLocation>
</comment>
<comment type="similarity">
    <text evidence="1">Belongs to the purine/pyrimidine phosphoribosyltransferase family.</text>
</comment>
<proteinExistence type="inferred from homology"/>
<dbReference type="EC" id="2.4.2.7" evidence="1"/>
<dbReference type="EMBL" id="CP000026">
    <property type="protein sequence ID" value="AAV78125.1"/>
    <property type="molecule type" value="Genomic_DNA"/>
</dbReference>
<dbReference type="RefSeq" id="WP_000127350.1">
    <property type="nucleotide sequence ID" value="NC_006511.1"/>
</dbReference>
<dbReference type="SMR" id="Q5PFK3"/>
<dbReference type="KEGG" id="spt:SPA2239"/>
<dbReference type="HOGENOM" id="CLU_063339_3_0_6"/>
<dbReference type="UniPathway" id="UPA00588">
    <property type="reaction ID" value="UER00646"/>
</dbReference>
<dbReference type="Proteomes" id="UP000008185">
    <property type="component" value="Chromosome"/>
</dbReference>
<dbReference type="GO" id="GO:0005829">
    <property type="term" value="C:cytosol"/>
    <property type="evidence" value="ECO:0007669"/>
    <property type="project" value="TreeGrafter"/>
</dbReference>
<dbReference type="GO" id="GO:0003999">
    <property type="term" value="F:adenine phosphoribosyltransferase activity"/>
    <property type="evidence" value="ECO:0007669"/>
    <property type="project" value="UniProtKB-UniRule"/>
</dbReference>
<dbReference type="GO" id="GO:0006168">
    <property type="term" value="P:adenine salvage"/>
    <property type="evidence" value="ECO:0007669"/>
    <property type="project" value="InterPro"/>
</dbReference>
<dbReference type="GO" id="GO:0044209">
    <property type="term" value="P:AMP salvage"/>
    <property type="evidence" value="ECO:0007669"/>
    <property type="project" value="UniProtKB-UniRule"/>
</dbReference>
<dbReference type="GO" id="GO:0006166">
    <property type="term" value="P:purine ribonucleoside salvage"/>
    <property type="evidence" value="ECO:0007669"/>
    <property type="project" value="UniProtKB-KW"/>
</dbReference>
<dbReference type="CDD" id="cd06223">
    <property type="entry name" value="PRTases_typeI"/>
    <property type="match status" value="1"/>
</dbReference>
<dbReference type="FunFam" id="3.40.50.2020:FF:000004">
    <property type="entry name" value="Adenine phosphoribosyltransferase"/>
    <property type="match status" value="1"/>
</dbReference>
<dbReference type="Gene3D" id="3.40.50.2020">
    <property type="match status" value="1"/>
</dbReference>
<dbReference type="HAMAP" id="MF_00004">
    <property type="entry name" value="Aden_phosphoribosyltr"/>
    <property type="match status" value="1"/>
</dbReference>
<dbReference type="InterPro" id="IPR005764">
    <property type="entry name" value="Ade_phspho_trans"/>
</dbReference>
<dbReference type="InterPro" id="IPR050120">
    <property type="entry name" value="Adenine_PRTase"/>
</dbReference>
<dbReference type="InterPro" id="IPR000836">
    <property type="entry name" value="PRibTrfase_dom"/>
</dbReference>
<dbReference type="InterPro" id="IPR029057">
    <property type="entry name" value="PRTase-like"/>
</dbReference>
<dbReference type="NCBIfam" id="TIGR01090">
    <property type="entry name" value="apt"/>
    <property type="match status" value="1"/>
</dbReference>
<dbReference type="NCBIfam" id="NF002632">
    <property type="entry name" value="PRK02304.1-1"/>
    <property type="match status" value="1"/>
</dbReference>
<dbReference type="NCBIfam" id="NF002634">
    <property type="entry name" value="PRK02304.1-3"/>
    <property type="match status" value="1"/>
</dbReference>
<dbReference type="NCBIfam" id="NF002636">
    <property type="entry name" value="PRK02304.1-5"/>
    <property type="match status" value="1"/>
</dbReference>
<dbReference type="PANTHER" id="PTHR11776">
    <property type="entry name" value="ADENINE PHOSPHORIBOSYLTRANSFERASE"/>
    <property type="match status" value="1"/>
</dbReference>
<dbReference type="PANTHER" id="PTHR11776:SF7">
    <property type="entry name" value="PHOSPHORIBOSYLTRANSFERASE DOMAIN-CONTAINING PROTEIN"/>
    <property type="match status" value="1"/>
</dbReference>
<dbReference type="Pfam" id="PF00156">
    <property type="entry name" value="Pribosyltran"/>
    <property type="match status" value="1"/>
</dbReference>
<dbReference type="SUPFAM" id="SSF53271">
    <property type="entry name" value="PRTase-like"/>
    <property type="match status" value="1"/>
</dbReference>
<dbReference type="PROSITE" id="PS00103">
    <property type="entry name" value="PUR_PYR_PR_TRANSFER"/>
    <property type="match status" value="1"/>
</dbReference>
<name>APT_SALPA</name>
<sequence>MTATAQQLEFLKNSIKSIQDYPKPGILFRDVTSLLEDPKAYALSIELLVERYKNAGITKVVGTEARGFLFGAPVALGLGVGFVPVRKPRKLPRETIAETYELEYGTDQLEIHVDAIKPGDNVLVVDDLLATGGTIEATVKLIRRLGGKVTDAAFIINLFDLGGEQRLEKQGITCYSLVPFPGH</sequence>
<protein>
    <recommendedName>
        <fullName evidence="1">Adenine phosphoribosyltransferase</fullName>
        <shortName evidence="1">APRT</shortName>
        <ecNumber evidence="1">2.4.2.7</ecNumber>
    </recommendedName>
</protein>
<accession>Q5PFK3</accession>
<feature type="chain" id="PRO_0000149443" description="Adenine phosphoribosyltransferase">
    <location>
        <begin position="1"/>
        <end position="183"/>
    </location>
</feature>
<organism>
    <name type="scientific">Salmonella paratyphi A (strain ATCC 9150 / SARB42)</name>
    <dbReference type="NCBI Taxonomy" id="295319"/>
    <lineage>
        <taxon>Bacteria</taxon>
        <taxon>Pseudomonadati</taxon>
        <taxon>Pseudomonadota</taxon>
        <taxon>Gammaproteobacteria</taxon>
        <taxon>Enterobacterales</taxon>
        <taxon>Enterobacteriaceae</taxon>
        <taxon>Salmonella</taxon>
    </lineage>
</organism>
<gene>
    <name evidence="1" type="primary">apt</name>
    <name type="ordered locus">SPA2239</name>
</gene>
<evidence type="ECO:0000255" key="1">
    <source>
        <dbReference type="HAMAP-Rule" id="MF_00004"/>
    </source>
</evidence>
<reference key="1">
    <citation type="journal article" date="2004" name="Nat. Genet.">
        <title>Comparison of genome degradation in Paratyphi A and Typhi, human-restricted serovars of Salmonella enterica that cause typhoid.</title>
        <authorList>
            <person name="McClelland M."/>
            <person name="Sanderson K.E."/>
            <person name="Clifton S.W."/>
            <person name="Latreille P."/>
            <person name="Porwollik S."/>
            <person name="Sabo A."/>
            <person name="Meyer R."/>
            <person name="Bieri T."/>
            <person name="Ozersky P."/>
            <person name="McLellan M."/>
            <person name="Harkins C.R."/>
            <person name="Wang C."/>
            <person name="Nguyen C."/>
            <person name="Berghoff A."/>
            <person name="Elliott G."/>
            <person name="Kohlberg S."/>
            <person name="Strong C."/>
            <person name="Du F."/>
            <person name="Carter J."/>
            <person name="Kremizki C."/>
            <person name="Layman D."/>
            <person name="Leonard S."/>
            <person name="Sun H."/>
            <person name="Fulton L."/>
            <person name="Nash W."/>
            <person name="Miner T."/>
            <person name="Minx P."/>
            <person name="Delehaunty K."/>
            <person name="Fronick C."/>
            <person name="Magrini V."/>
            <person name="Nhan M."/>
            <person name="Warren W."/>
            <person name="Florea L."/>
            <person name="Spieth J."/>
            <person name="Wilson R.K."/>
        </authorList>
    </citation>
    <scope>NUCLEOTIDE SEQUENCE [LARGE SCALE GENOMIC DNA]</scope>
    <source>
        <strain>ATCC 9150 / SARB42</strain>
    </source>
</reference>